<protein>
    <recommendedName>
        <fullName>Spondin-1</fullName>
    </recommendedName>
    <alternativeName>
        <fullName>F-spondin</fullName>
    </alternativeName>
    <alternativeName>
        <fullName>Vascular smooth muscle cell growth-promoting factor</fullName>
    </alternativeName>
</protein>
<comment type="function">
    <text evidence="1">Cell adhesion protein that promotes the attachment of spinal cord and sensory neuron cells and the outgrowth of neurites in vitro. May contribute to the growth and guidance of axons in both the spinal cord and the PNS (By similarity). Major factor for vascular smooth muscle cell.</text>
</comment>
<comment type="subunit">
    <text evidence="1">Binds to the central extracellular domain of APP and inhibits beta-secretase cleavage of APP.</text>
</comment>
<comment type="subcellular location">
    <subcellularLocation>
        <location evidence="1">Secreted</location>
        <location evidence="1">Extracellular space</location>
        <location evidence="1">Extracellular matrix</location>
    </subcellularLocation>
</comment>
<gene>
    <name type="primary">SPON1</name>
    <name type="synonym">VSGP</name>
</gene>
<reference key="1">
    <citation type="journal article" date="2001" name="Arch. Biochem. Biophys.">
        <title>Isolation and characterization of vascular smooth muscle cell growth promoting factor from bovine ovarian follicular fluid and its cDNA cloning from bovine and human ovary.</title>
        <authorList>
            <person name="Miyamoto K."/>
            <person name="Morishita Y."/>
            <person name="Yamazaki M."/>
            <person name="Minamino N."/>
            <person name="Kangawa K."/>
            <person name="Matsuo H."/>
            <person name="Mizutani T."/>
            <person name="Yamada K."/>
            <person name="Minegishi T."/>
        </authorList>
    </citation>
    <scope>NUCLEOTIDE SEQUENCE [MRNA]</scope>
    <scope>PARTIAL PROTEIN SEQUENCE</scope>
    <source>
        <tissue>Ovary</tissue>
    </source>
</reference>
<evidence type="ECO:0000250" key="1"/>
<evidence type="ECO:0000250" key="2">
    <source>
        <dbReference type="UniProtKB" id="Q9HCB6"/>
    </source>
</evidence>
<evidence type="ECO:0000255" key="3"/>
<evidence type="ECO:0000255" key="4">
    <source>
        <dbReference type="PROSITE-ProRule" id="PRU00210"/>
    </source>
</evidence>
<evidence type="ECO:0000255" key="5">
    <source>
        <dbReference type="PROSITE-ProRule" id="PRU00363"/>
    </source>
</evidence>
<evidence type="ECO:0000255" key="6">
    <source>
        <dbReference type="PROSITE-ProRule" id="PRU00364"/>
    </source>
</evidence>
<proteinExistence type="evidence at protein level"/>
<keyword id="KW-0130">Cell adhesion</keyword>
<keyword id="KW-0903">Direct protein sequencing</keyword>
<keyword id="KW-1015">Disulfide bond</keyword>
<keyword id="KW-0272">Extracellular matrix</keyword>
<keyword id="KW-0325">Glycoprotein</keyword>
<keyword id="KW-0479">Metal-binding</keyword>
<keyword id="KW-1185">Reference proteome</keyword>
<keyword id="KW-0677">Repeat</keyword>
<keyword id="KW-0964">Secreted</keyword>
<keyword id="KW-0732">Signal</keyword>
<organism>
    <name type="scientific">Bos taurus</name>
    <name type="common">Bovine</name>
    <dbReference type="NCBI Taxonomy" id="9913"/>
    <lineage>
        <taxon>Eukaryota</taxon>
        <taxon>Metazoa</taxon>
        <taxon>Chordata</taxon>
        <taxon>Craniata</taxon>
        <taxon>Vertebrata</taxon>
        <taxon>Euteleostomi</taxon>
        <taxon>Mammalia</taxon>
        <taxon>Eutheria</taxon>
        <taxon>Laurasiatheria</taxon>
        <taxon>Artiodactyla</taxon>
        <taxon>Ruminantia</taxon>
        <taxon>Pecora</taxon>
        <taxon>Bovidae</taxon>
        <taxon>Bovinae</taxon>
        <taxon>Bos</taxon>
    </lineage>
</organism>
<sequence>MRLSPVLLRLSRGPALLALALPLAVALAFSDETLDKVPKSEGYCSRILRVQGTRREGYTEFSLRVEGDPDFYKPGTSYRVTLSAAPPSYFRGFTLIALKENREGDKEEDHAGTFQIIDEEETQFMSNCPVAVTESTPRRRTRIQVFWIAPPAGTGCVILKASIVQKRIIYFQDEGSLTKKLCEQDSTFDGVTDKPILDCCACGTAKYRLTFYGNWSEKTHPKDYPRRANHWSAIIGGSHSKNYVLWEYGGYASEGVKQVAELGSPVKMEEEIRQQSDEVLTVIKAKAQWPAWQPLNVRAAPSAEFSVDRTRHLMSFLTMMGPSPDWNVGLSAEDLCTKECGWVQKVVQDLIPWDAGTDSGVTYESPNKPTIPQEKIRPLTSLDHPQSPFYDPEGGSITQVARVVIERIARKGEQCNIVPDNVDDIVADLAPEEKDEDDTPETCIYSNWSPWSACSSSTCDKGKRMRQRMLKAQLDLSVPCPDTQDFQPCMGPGCSDEDGSTCTMSEWITWSPCSISCGTGTRSRERYVKQFPEDGSVCTLPTEETEKCTVNEECSPSSCLTTEWGEWDECSATCGMGMKKRHRMVKMSPADGSMCKAETSQAEKCMMPECHTIPCLLSLWSEWSDCSVTCGKGMRTRQRMLKSLAELGDCNEELEQVEKCMLPECPIDCELTEWSQWSECNKSCGKGHMIRTRMIQMEPQFGGTPCPETVQRKKCRIRKCLRNPSIQNLRWREARESRRSEQLREESDGDQFPGCRMRPWTAWSECTKLCGGGIQERYMTVKKRFKSSQFTSCKDKKEIRACNVHPC</sequence>
<name>SPON1_BOVIN</name>
<dbReference type="EMBL" id="AB051389">
    <property type="protein sequence ID" value="BAB18460.1"/>
    <property type="molecule type" value="mRNA"/>
</dbReference>
<dbReference type="RefSeq" id="NP_777168.1">
    <property type="nucleotide sequence ID" value="NM_174743.2"/>
</dbReference>
<dbReference type="SMR" id="Q9GLX9"/>
<dbReference type="FunCoup" id="Q9GLX9">
    <property type="interactions" value="290"/>
</dbReference>
<dbReference type="STRING" id="9913.ENSBTAP00000012059"/>
<dbReference type="GlyCosmos" id="Q9GLX9">
    <property type="glycosylation" value="2 sites, No reported glycans"/>
</dbReference>
<dbReference type="GlyGen" id="Q9GLX9">
    <property type="glycosylation" value="2 sites"/>
</dbReference>
<dbReference type="PaxDb" id="9913-ENSBTAP00000012059"/>
<dbReference type="Ensembl" id="ENSBTAT00000012059.6">
    <property type="protein sequence ID" value="ENSBTAP00000012059.5"/>
    <property type="gene ID" value="ENSBTAG00000009150.7"/>
</dbReference>
<dbReference type="GeneID" id="282866"/>
<dbReference type="KEGG" id="bta:282866"/>
<dbReference type="CTD" id="10418"/>
<dbReference type="VEuPathDB" id="HostDB:ENSBTAG00000009150"/>
<dbReference type="VGNC" id="VGNC:35227">
    <property type="gene designation" value="SPON1"/>
</dbReference>
<dbReference type="eggNOG" id="KOG3539">
    <property type="taxonomic scope" value="Eukaryota"/>
</dbReference>
<dbReference type="GeneTree" id="ENSGT00940000154910"/>
<dbReference type="HOGENOM" id="CLU_014540_1_0_1"/>
<dbReference type="InParanoid" id="Q9GLX9"/>
<dbReference type="OMA" id="IPRIEGC"/>
<dbReference type="OrthoDB" id="347314at2759"/>
<dbReference type="TreeFam" id="TF313353"/>
<dbReference type="Reactome" id="R-BTA-5173214">
    <property type="pathway name" value="O-glycosylation of TSR domain-containing proteins"/>
</dbReference>
<dbReference type="Proteomes" id="UP000009136">
    <property type="component" value="Chromosome 15"/>
</dbReference>
<dbReference type="Bgee" id="ENSBTAG00000009150">
    <property type="expression patterns" value="Expressed in theca cell and 106 other cell types or tissues"/>
</dbReference>
<dbReference type="GO" id="GO:0031012">
    <property type="term" value="C:extracellular matrix"/>
    <property type="evidence" value="ECO:0000318"/>
    <property type="project" value="GO_Central"/>
</dbReference>
<dbReference type="GO" id="GO:0005576">
    <property type="term" value="C:extracellular region"/>
    <property type="evidence" value="ECO:0007669"/>
    <property type="project" value="UniProtKB-KW"/>
</dbReference>
<dbReference type="GO" id="GO:0050693">
    <property type="term" value="F:LBD domain binding"/>
    <property type="evidence" value="ECO:0007669"/>
    <property type="project" value="Ensembl"/>
</dbReference>
<dbReference type="GO" id="GO:0046872">
    <property type="term" value="F:metal ion binding"/>
    <property type="evidence" value="ECO:0007669"/>
    <property type="project" value="UniProtKB-KW"/>
</dbReference>
<dbReference type="GO" id="GO:0007155">
    <property type="term" value="P:cell adhesion"/>
    <property type="evidence" value="ECO:0000318"/>
    <property type="project" value="GO_Central"/>
</dbReference>
<dbReference type="GO" id="GO:1902430">
    <property type="term" value="P:negative regulation of amyloid-beta formation"/>
    <property type="evidence" value="ECO:0007669"/>
    <property type="project" value="Ensembl"/>
</dbReference>
<dbReference type="GO" id="GO:1902993">
    <property type="term" value="P:positive regulation of amyloid precursor protein catabolic process"/>
    <property type="evidence" value="ECO:0007669"/>
    <property type="project" value="Ensembl"/>
</dbReference>
<dbReference type="GO" id="GO:0010954">
    <property type="term" value="P:positive regulation of protein processing"/>
    <property type="evidence" value="ECO:0007669"/>
    <property type="project" value="Ensembl"/>
</dbReference>
<dbReference type="GO" id="GO:0016485">
    <property type="term" value="P:protein processing"/>
    <property type="evidence" value="ECO:0007669"/>
    <property type="project" value="Ensembl"/>
</dbReference>
<dbReference type="CDD" id="cd08544">
    <property type="entry name" value="Reeler"/>
    <property type="match status" value="1"/>
</dbReference>
<dbReference type="FunFam" id="2.20.100.10:FF:000026">
    <property type="entry name" value="Spondin 1"/>
    <property type="match status" value="1"/>
</dbReference>
<dbReference type="FunFam" id="2.20.100.10:FF:000013">
    <property type="entry name" value="Spondin 1a"/>
    <property type="match status" value="2"/>
</dbReference>
<dbReference type="FunFam" id="2.60.40.2130:FF:000001">
    <property type="entry name" value="Spondin 1a"/>
    <property type="match status" value="1"/>
</dbReference>
<dbReference type="FunFam" id="2.20.100.10:FF:000024">
    <property type="entry name" value="Spondin-1"/>
    <property type="match status" value="1"/>
</dbReference>
<dbReference type="FunFam" id="2.20.100.10:FF:000034">
    <property type="entry name" value="Spondin-1"/>
    <property type="match status" value="1"/>
</dbReference>
<dbReference type="FunFam" id="2.20.100.10:FF:000081">
    <property type="entry name" value="Spondin-1"/>
    <property type="match status" value="1"/>
</dbReference>
<dbReference type="FunFam" id="2.60.40.4060:FF:000002">
    <property type="entry name" value="Spondin-1"/>
    <property type="match status" value="1"/>
</dbReference>
<dbReference type="Gene3D" id="2.60.40.2130">
    <property type="entry name" value="F-spondin domain"/>
    <property type="match status" value="1"/>
</dbReference>
<dbReference type="Gene3D" id="2.60.40.4060">
    <property type="entry name" value="Reeler domain"/>
    <property type="match status" value="1"/>
</dbReference>
<dbReference type="Gene3D" id="2.20.100.10">
    <property type="entry name" value="Thrombospondin type-1 (TSP1) repeat"/>
    <property type="match status" value="6"/>
</dbReference>
<dbReference type="InterPro" id="IPR002861">
    <property type="entry name" value="Reeler_dom"/>
</dbReference>
<dbReference type="InterPro" id="IPR042307">
    <property type="entry name" value="Reeler_sf"/>
</dbReference>
<dbReference type="InterPro" id="IPR051418">
    <property type="entry name" value="Spondin/Thrombospondin_T1"/>
</dbReference>
<dbReference type="InterPro" id="IPR009465">
    <property type="entry name" value="Spondin_N"/>
</dbReference>
<dbReference type="InterPro" id="IPR038678">
    <property type="entry name" value="Spondin_N_sf"/>
</dbReference>
<dbReference type="InterPro" id="IPR000884">
    <property type="entry name" value="TSP1_rpt"/>
</dbReference>
<dbReference type="InterPro" id="IPR036383">
    <property type="entry name" value="TSP1_rpt_sf"/>
</dbReference>
<dbReference type="InterPro" id="IPR044004">
    <property type="entry name" value="TSP1_spondin_dom"/>
</dbReference>
<dbReference type="NCBIfam" id="NF038123">
    <property type="entry name" value="NF038123_dom"/>
    <property type="match status" value="1"/>
</dbReference>
<dbReference type="PANTHER" id="PTHR11311">
    <property type="entry name" value="SPONDIN"/>
    <property type="match status" value="1"/>
</dbReference>
<dbReference type="PANTHER" id="PTHR11311:SF16">
    <property type="entry name" value="SPONDIN-1"/>
    <property type="match status" value="1"/>
</dbReference>
<dbReference type="Pfam" id="PF02014">
    <property type="entry name" value="Reeler"/>
    <property type="match status" value="1"/>
</dbReference>
<dbReference type="Pfam" id="PF06468">
    <property type="entry name" value="Spond_N"/>
    <property type="match status" value="1"/>
</dbReference>
<dbReference type="Pfam" id="PF19028">
    <property type="entry name" value="TSP1_spondin"/>
    <property type="match status" value="1"/>
</dbReference>
<dbReference type="Pfam" id="PF00090">
    <property type="entry name" value="TSP_1"/>
    <property type="match status" value="5"/>
</dbReference>
<dbReference type="SMART" id="SM00209">
    <property type="entry name" value="TSP1"/>
    <property type="match status" value="6"/>
</dbReference>
<dbReference type="SUPFAM" id="SSF82895">
    <property type="entry name" value="TSP-1 type 1 repeat"/>
    <property type="match status" value="6"/>
</dbReference>
<dbReference type="PROSITE" id="PS51019">
    <property type="entry name" value="REELIN"/>
    <property type="match status" value="1"/>
</dbReference>
<dbReference type="PROSITE" id="PS51020">
    <property type="entry name" value="SPONDIN"/>
    <property type="match status" value="1"/>
</dbReference>
<dbReference type="PROSITE" id="PS50092">
    <property type="entry name" value="TSP1"/>
    <property type="match status" value="6"/>
</dbReference>
<accession>Q9GLX9</accession>
<feature type="signal peptide">
    <location>
        <begin position="1"/>
        <end position="28"/>
    </location>
</feature>
<feature type="chain" id="PRO_0000035864" description="Spondin-1">
    <location>
        <begin position="29"/>
        <end position="807"/>
    </location>
</feature>
<feature type="domain" description="Reelin" evidence="5">
    <location>
        <begin position="29"/>
        <end position="194"/>
    </location>
</feature>
<feature type="domain" description="Spondin" evidence="6">
    <location>
        <begin position="195"/>
        <end position="388"/>
    </location>
</feature>
<feature type="domain" description="TSP type-1 1" evidence="4">
    <location>
        <begin position="442"/>
        <end position="495"/>
    </location>
</feature>
<feature type="domain" description="TSP type-1 2" evidence="4">
    <location>
        <begin position="501"/>
        <end position="555"/>
    </location>
</feature>
<feature type="domain" description="TSP type-1 3" evidence="4">
    <location>
        <begin position="558"/>
        <end position="611"/>
    </location>
</feature>
<feature type="domain" description="TSP type-1 4" evidence="4">
    <location>
        <begin position="614"/>
        <end position="666"/>
    </location>
</feature>
<feature type="domain" description="TSP type-1 5" evidence="4">
    <location>
        <begin position="668"/>
        <end position="721"/>
    </location>
</feature>
<feature type="domain" description="TSP type-1 6" evidence="4">
    <location>
        <begin position="754"/>
        <end position="806"/>
    </location>
</feature>
<feature type="binding site" evidence="2">
    <location>
        <position position="325"/>
    </location>
    <ligand>
        <name>Ca(2+)</name>
        <dbReference type="ChEBI" id="CHEBI:29108"/>
    </ligand>
</feature>
<feature type="binding site" evidence="2">
    <location>
        <position position="354"/>
    </location>
    <ligand>
        <name>Ca(2+)</name>
        <dbReference type="ChEBI" id="CHEBI:29108"/>
    </ligand>
</feature>
<feature type="binding site" evidence="2">
    <location>
        <position position="358"/>
    </location>
    <ligand>
        <name>Ca(2+)</name>
        <dbReference type="ChEBI" id="CHEBI:29108"/>
    </ligand>
</feature>
<feature type="glycosylation site" description="N-linked (GlcNAc...) asparagine" evidence="3">
    <location>
        <position position="214"/>
    </location>
</feature>
<feature type="glycosylation site" description="N-linked (GlcNAc...) asparagine" evidence="3">
    <location>
        <position position="681"/>
    </location>
</feature>
<feature type="disulfide bond" evidence="4">
    <location>
        <begin position="44"/>
        <end position="128"/>
    </location>
</feature>
<feature type="disulfide bond" evidence="4">
    <location>
        <begin position="156"/>
        <end position="182"/>
    </location>
</feature>
<feature type="disulfide bond" evidence="2">
    <location>
        <begin position="199"/>
        <end position="336"/>
    </location>
</feature>
<feature type="disulfide bond" evidence="2">
    <location>
        <begin position="200"/>
        <end position="340"/>
    </location>
</feature>
<feature type="disulfide bond" evidence="2">
    <location>
        <begin position="202"/>
        <end position="415"/>
    </location>
</feature>
<feature type="disulfide bond" evidence="4">
    <location>
        <begin position="443"/>
        <end position="480"/>
    </location>
</feature>
<feature type="disulfide bond" evidence="4">
    <location>
        <begin position="454"/>
        <end position="489"/>
    </location>
</feature>
<feature type="disulfide bond" evidence="4">
    <location>
        <begin position="459"/>
        <end position="494"/>
    </location>
</feature>
<feature type="disulfide bond" evidence="4">
    <location>
        <begin position="502"/>
        <end position="538"/>
    </location>
</feature>
<feature type="disulfide bond" evidence="4">
    <location>
        <begin position="513"/>
        <end position="517"/>
    </location>
</feature>
<feature type="disulfide bond" evidence="4">
    <location>
        <begin position="548"/>
        <end position="554"/>
    </location>
</feature>
<feature type="disulfide bond" evidence="4">
    <location>
        <begin position="559"/>
        <end position="595"/>
    </location>
</feature>
<feature type="disulfide bond" evidence="4">
    <location>
        <begin position="570"/>
        <end position="574"/>
    </location>
</feature>
<feature type="disulfide bond" evidence="4">
    <location>
        <begin position="605"/>
        <end position="610"/>
    </location>
</feature>
<feature type="disulfide bond" evidence="4">
    <location>
        <begin position="615"/>
        <end position="650"/>
    </location>
</feature>
<feature type="disulfide bond" evidence="4">
    <location>
        <begin position="626"/>
        <end position="630"/>
    </location>
</feature>
<feature type="disulfide bond" evidence="4">
    <location>
        <begin position="660"/>
        <end position="665"/>
    </location>
</feature>